<dbReference type="EMBL" id="BC129718">
    <property type="protein sequence ID" value="AAI29719.1"/>
    <property type="molecule type" value="mRNA"/>
</dbReference>
<dbReference type="SMR" id="A1L2U9"/>
<dbReference type="DNASU" id="100036960"/>
<dbReference type="GeneID" id="100036960"/>
<dbReference type="KEGG" id="xla:100036960"/>
<dbReference type="AGR" id="Xenbase:XB-GENE-6255849"/>
<dbReference type="CTD" id="100036960"/>
<dbReference type="Xenbase" id="XB-GENE-6255849">
    <property type="gene designation" value="zbtb8a.S"/>
</dbReference>
<dbReference type="OrthoDB" id="624345at2759"/>
<dbReference type="Proteomes" id="UP000186698">
    <property type="component" value="Chromosome 2S"/>
</dbReference>
<dbReference type="Bgee" id="100036960">
    <property type="expression patterns" value="Expressed in oocyte and 19 other cell types or tissues"/>
</dbReference>
<dbReference type="GO" id="GO:0005634">
    <property type="term" value="C:nucleus"/>
    <property type="evidence" value="ECO:0007669"/>
    <property type="project" value="UniProtKB-SubCell"/>
</dbReference>
<dbReference type="GO" id="GO:0000981">
    <property type="term" value="F:DNA-binding transcription factor activity, RNA polymerase II-specific"/>
    <property type="evidence" value="ECO:0000318"/>
    <property type="project" value="GO_Central"/>
</dbReference>
<dbReference type="GO" id="GO:0000978">
    <property type="term" value="F:RNA polymerase II cis-regulatory region sequence-specific DNA binding"/>
    <property type="evidence" value="ECO:0000318"/>
    <property type="project" value="GO_Central"/>
</dbReference>
<dbReference type="GO" id="GO:0008270">
    <property type="term" value="F:zinc ion binding"/>
    <property type="evidence" value="ECO:0007669"/>
    <property type="project" value="UniProtKB-KW"/>
</dbReference>
<dbReference type="GO" id="GO:0006357">
    <property type="term" value="P:regulation of transcription by RNA polymerase II"/>
    <property type="evidence" value="ECO:0000318"/>
    <property type="project" value="GO_Central"/>
</dbReference>
<dbReference type="CDD" id="cd18329">
    <property type="entry name" value="BTB_POZ_ZBTB8A_BOZF1"/>
    <property type="match status" value="1"/>
</dbReference>
<dbReference type="FunFam" id="3.30.160.60:FF:000065">
    <property type="entry name" value="B-cell CLL/lymphoma 6, member B"/>
    <property type="match status" value="1"/>
</dbReference>
<dbReference type="Gene3D" id="3.30.160.60">
    <property type="entry name" value="Classic Zinc Finger"/>
    <property type="match status" value="2"/>
</dbReference>
<dbReference type="Gene3D" id="3.30.710.10">
    <property type="entry name" value="Potassium Channel Kv1.1, Chain A"/>
    <property type="match status" value="1"/>
</dbReference>
<dbReference type="InterPro" id="IPR000210">
    <property type="entry name" value="BTB/POZ_dom"/>
</dbReference>
<dbReference type="InterPro" id="IPR011333">
    <property type="entry name" value="SKP1/BTB/POZ_sf"/>
</dbReference>
<dbReference type="InterPro" id="IPR036236">
    <property type="entry name" value="Znf_C2H2_sf"/>
</dbReference>
<dbReference type="InterPro" id="IPR013087">
    <property type="entry name" value="Znf_C2H2_type"/>
</dbReference>
<dbReference type="InterPro" id="IPR050457">
    <property type="entry name" value="ZnFinger_BTB_dom_contain"/>
</dbReference>
<dbReference type="PANTHER" id="PTHR46105">
    <property type="entry name" value="AGAP004733-PA"/>
    <property type="match status" value="1"/>
</dbReference>
<dbReference type="PANTHER" id="PTHR46105:SF12">
    <property type="entry name" value="ZINC FINGER AND BTB DOMAIN-CONTAINING PROTEIN 8A"/>
    <property type="match status" value="1"/>
</dbReference>
<dbReference type="Pfam" id="PF00651">
    <property type="entry name" value="BTB"/>
    <property type="match status" value="1"/>
</dbReference>
<dbReference type="Pfam" id="PF00096">
    <property type="entry name" value="zf-C2H2"/>
    <property type="match status" value="1"/>
</dbReference>
<dbReference type="SMART" id="SM00225">
    <property type="entry name" value="BTB"/>
    <property type="match status" value="1"/>
</dbReference>
<dbReference type="SMART" id="SM00355">
    <property type="entry name" value="ZnF_C2H2"/>
    <property type="match status" value="2"/>
</dbReference>
<dbReference type="SUPFAM" id="SSF57667">
    <property type="entry name" value="beta-beta-alpha zinc fingers"/>
    <property type="match status" value="1"/>
</dbReference>
<dbReference type="SUPFAM" id="SSF54695">
    <property type="entry name" value="POZ domain"/>
    <property type="match status" value="1"/>
</dbReference>
<dbReference type="PROSITE" id="PS50097">
    <property type="entry name" value="BTB"/>
    <property type="match status" value="1"/>
</dbReference>
<dbReference type="PROSITE" id="PS00028">
    <property type="entry name" value="ZINC_FINGER_C2H2_1"/>
    <property type="match status" value="2"/>
</dbReference>
<dbReference type="PROSITE" id="PS50157">
    <property type="entry name" value="ZINC_FINGER_C2H2_2"/>
    <property type="match status" value="2"/>
</dbReference>
<keyword id="KW-0238">DNA-binding</keyword>
<keyword id="KW-0479">Metal-binding</keyword>
<keyword id="KW-0539">Nucleus</keyword>
<keyword id="KW-0597">Phosphoprotein</keyword>
<keyword id="KW-1185">Reference proteome</keyword>
<keyword id="KW-0677">Repeat</keyword>
<keyword id="KW-0804">Transcription</keyword>
<keyword id="KW-0805">Transcription regulation</keyword>
<keyword id="KW-0862">Zinc</keyword>
<keyword id="KW-0863">Zinc-finger</keyword>
<proteinExistence type="evidence at transcript level"/>
<organism>
    <name type="scientific">Xenopus laevis</name>
    <name type="common">African clawed frog</name>
    <dbReference type="NCBI Taxonomy" id="8355"/>
    <lineage>
        <taxon>Eukaryota</taxon>
        <taxon>Metazoa</taxon>
        <taxon>Chordata</taxon>
        <taxon>Craniata</taxon>
        <taxon>Vertebrata</taxon>
        <taxon>Euteleostomi</taxon>
        <taxon>Amphibia</taxon>
        <taxon>Batrachia</taxon>
        <taxon>Anura</taxon>
        <taxon>Pipoidea</taxon>
        <taxon>Pipidae</taxon>
        <taxon>Xenopodinae</taxon>
        <taxon>Xenopus</taxon>
        <taxon>Xenopus</taxon>
    </lineage>
</organism>
<reference key="1">
    <citation type="submission" date="2006-12" db="EMBL/GenBank/DDBJ databases">
        <authorList>
            <consortium name="NIH - Xenopus Gene Collection (XGC) project"/>
        </authorList>
    </citation>
    <scope>NUCLEOTIDE SEQUENCE [LARGE SCALE MRNA]</scope>
    <source>
        <tissue>Thymus</tissue>
    </source>
</reference>
<protein>
    <recommendedName>
        <fullName>Zinc finger and BTB domain-containing protein 8A.1-B</fullName>
    </recommendedName>
</protein>
<name>ZB8AB_XENLA</name>
<comment type="function">
    <text>May be involved in transcriptional regulation.</text>
</comment>
<comment type="subcellular location">
    <subcellularLocation>
        <location evidence="3">Nucleus</location>
    </subcellularLocation>
</comment>
<evidence type="ECO:0000255" key="1">
    <source>
        <dbReference type="PROSITE-ProRule" id="PRU00037"/>
    </source>
</evidence>
<evidence type="ECO:0000255" key="2">
    <source>
        <dbReference type="PROSITE-ProRule" id="PRU00042"/>
    </source>
</evidence>
<evidence type="ECO:0000305" key="3"/>
<gene>
    <name type="primary">zbtb8a.1-b</name>
</gene>
<sequence>MEFSSHHIRLLQQLDEQRRRDLFCDCHIIVEGQMFKAHRNVLFASSGYFKMLLSQSCRDMGEPITATFDVFSADTFTAILDFVYSGKLPLSGQNVIEVMSAASYLQMTDVIGVCKMFIKSSLDINEKDRDGFFSLSDKDTDSNGSGLYAAGWRTESSPTHTHKTTEHGSFIAGYNYPPPISSRLQHPFSKSPRKPELVRKHRRRLLPEALTPALSHIPLGDLVGGSTECMLHDEETVESVSQEEERTQTQVSIISIKVEDLDATSNSWPESPPQESLDQGSALHITKAEELYKAMPTILGGVSGWGEDELSSGRFKCPFCTHTVKRKADLKRHLRCHTGERPYPCEACGKRFTRLEHLRNHFQTIHEAGKLICRRCKLPVTKVTGRVIQDGTRRYRLCQACLAEAGLDNVNFDYGEDQPLVLPPENEREHCWNFKEEGRQENGSEAAESDLVIQEVVDSEEDELKQKQD</sequence>
<accession>A1L2U9</accession>
<feature type="chain" id="PRO_0000378512" description="Zinc finger and BTB domain-containing protein 8A.1-B">
    <location>
        <begin position="1"/>
        <end position="469"/>
    </location>
</feature>
<feature type="domain" description="BTB" evidence="1">
    <location>
        <begin position="24"/>
        <end position="92"/>
    </location>
</feature>
<feature type="zinc finger region" description="C2H2-type 1" evidence="2">
    <location>
        <begin position="315"/>
        <end position="337"/>
    </location>
</feature>
<feature type="zinc finger region" description="C2H2-type 2" evidence="2">
    <location>
        <begin position="343"/>
        <end position="366"/>
    </location>
</feature>